<organism>
    <name type="scientific">Vitis vinifera</name>
    <name type="common">Grape</name>
    <dbReference type="NCBI Taxonomy" id="29760"/>
    <lineage>
        <taxon>Eukaryota</taxon>
        <taxon>Viridiplantae</taxon>
        <taxon>Streptophyta</taxon>
        <taxon>Embryophyta</taxon>
        <taxon>Tracheophyta</taxon>
        <taxon>Spermatophyta</taxon>
        <taxon>Magnoliopsida</taxon>
        <taxon>eudicotyledons</taxon>
        <taxon>Gunneridae</taxon>
        <taxon>Pentapetalae</taxon>
        <taxon>rosids</taxon>
        <taxon>Vitales</taxon>
        <taxon>Vitaceae</taxon>
        <taxon>Viteae</taxon>
        <taxon>Vitis</taxon>
    </lineage>
</organism>
<evidence type="ECO:0000255" key="1">
    <source>
        <dbReference type="PROSITE-ProRule" id="PRU00251"/>
    </source>
</evidence>
<evidence type="ECO:0000255" key="2">
    <source>
        <dbReference type="PROSITE-ProRule" id="PRU00629"/>
    </source>
</evidence>
<evidence type="ECO:0000269" key="3">
    <source>
    </source>
</evidence>
<evidence type="ECO:0000269" key="4">
    <source>
    </source>
</evidence>
<evidence type="ECO:0000269" key="5">
    <source ref="1"/>
</evidence>
<evidence type="ECO:0000303" key="6">
    <source>
    </source>
</evidence>
<evidence type="ECO:0000303" key="7">
    <source>
    </source>
</evidence>
<evidence type="ECO:0000303" key="8">
    <source>
    </source>
</evidence>
<evidence type="ECO:0000303" key="9">
    <source>
    </source>
</evidence>
<evidence type="ECO:0000303" key="10">
    <source ref="1"/>
</evidence>
<evidence type="ECO:0000305" key="11"/>
<evidence type="ECO:0000305" key="12">
    <source>
    </source>
</evidence>
<evidence type="ECO:0000312" key="13">
    <source>
        <dbReference type="EMBL" id="AAY79173.1"/>
    </source>
</evidence>
<evidence type="ECO:0000312" key="14">
    <source>
        <dbReference type="EMBL" id="CCB45452.1"/>
    </source>
</evidence>
<accession>Q0HA25</accession>
<accession>F6H0I0</accession>
<keyword id="KW-0238">DNA-binding</keyword>
<keyword id="KW-0287">Flowering</keyword>
<keyword id="KW-0539">Nucleus</keyword>
<keyword id="KW-1185">Reference proteome</keyword>
<keyword id="KW-0804">Transcription</keyword>
<keyword id="KW-0805">Transcription regulation</keyword>
<protein>
    <recommendedName>
        <fullName evidence="11">Agamous-like MADS-box protein MADS9</fullName>
    </recommendedName>
    <alternativeName>
        <fullName evidence="11">PISTILLATA-like protein</fullName>
        <shortName evidence="7 8">VvPI</shortName>
        <shortName evidence="9">VviPI</shortName>
    </alternativeName>
    <alternativeName>
        <fullName evidence="8">Protein FLESHLESS BERRY</fullName>
    </alternativeName>
    <alternativeName>
        <fullName evidence="10">VvMADS9</fullName>
    </alternativeName>
</protein>
<dbReference type="EMBL" id="DQ059750">
    <property type="protein sequence ID" value="AAY79173.1"/>
    <property type="molecule type" value="mRNA"/>
</dbReference>
<dbReference type="EMBL" id="DQ988043">
    <property type="protein sequence ID" value="ABK59993.1"/>
    <property type="molecule type" value="Genomic_DNA"/>
</dbReference>
<dbReference type="EMBL" id="JQ993315">
    <property type="protein sequence ID" value="AFR53062.1"/>
    <property type="molecule type" value="Genomic_DNA"/>
</dbReference>
<dbReference type="EMBL" id="JQ993316">
    <property type="protein sequence ID" value="AFR53063.1"/>
    <property type="molecule type" value="Genomic_DNA"/>
</dbReference>
<dbReference type="EMBL" id="FN595227">
    <property type="protein sequence ID" value="CCB45452.1"/>
    <property type="molecule type" value="Genomic_DNA"/>
</dbReference>
<dbReference type="RefSeq" id="NP_001267875.1">
    <property type="nucleotide sequence ID" value="NM_001280946.1"/>
</dbReference>
<dbReference type="SMR" id="Q0HA25"/>
<dbReference type="FunCoup" id="Q0HA25">
    <property type="interactions" value="27"/>
</dbReference>
<dbReference type="STRING" id="29760.Q0HA25"/>
<dbReference type="PaxDb" id="29760-VIT_18s0001g01760.t01"/>
<dbReference type="EnsemblPlants" id="Vitvi18g00221_t001">
    <property type="protein sequence ID" value="Vitvi18g00221_P001"/>
    <property type="gene ID" value="Vitvi18g00221"/>
</dbReference>
<dbReference type="GeneID" id="100232978"/>
<dbReference type="Gramene" id="Vitvi18g00221_t001">
    <property type="protein sequence ID" value="Vitvi18g00221_P001"/>
    <property type="gene ID" value="Vitvi18g00221"/>
</dbReference>
<dbReference type="KEGG" id="vvi:100232978"/>
<dbReference type="eggNOG" id="KOG0014">
    <property type="taxonomic scope" value="Eukaryota"/>
</dbReference>
<dbReference type="HOGENOM" id="CLU_053053_0_4_1"/>
<dbReference type="InParanoid" id="Q0HA25"/>
<dbReference type="OrthoDB" id="1898716at2759"/>
<dbReference type="Proteomes" id="UP000009183">
    <property type="component" value="Chromosome 18"/>
</dbReference>
<dbReference type="ExpressionAtlas" id="Q0HA25">
    <property type="expression patterns" value="differential"/>
</dbReference>
<dbReference type="GO" id="GO:0005634">
    <property type="term" value="C:nucleus"/>
    <property type="evidence" value="ECO:0007669"/>
    <property type="project" value="UniProtKB-SubCell"/>
</dbReference>
<dbReference type="GO" id="GO:0000981">
    <property type="term" value="F:DNA-binding transcription factor activity, RNA polymerase II-specific"/>
    <property type="evidence" value="ECO:0000318"/>
    <property type="project" value="GO_Central"/>
</dbReference>
<dbReference type="GO" id="GO:0046983">
    <property type="term" value="F:protein dimerization activity"/>
    <property type="evidence" value="ECO:0007669"/>
    <property type="project" value="InterPro"/>
</dbReference>
<dbReference type="GO" id="GO:0000978">
    <property type="term" value="F:RNA polymerase II cis-regulatory region sequence-specific DNA binding"/>
    <property type="evidence" value="ECO:0000318"/>
    <property type="project" value="GO_Central"/>
</dbReference>
<dbReference type="GO" id="GO:0045944">
    <property type="term" value="P:positive regulation of transcription by RNA polymerase II"/>
    <property type="evidence" value="ECO:0007669"/>
    <property type="project" value="InterPro"/>
</dbReference>
<dbReference type="GO" id="GO:0006357">
    <property type="term" value="P:regulation of transcription by RNA polymerase II"/>
    <property type="evidence" value="ECO:0000318"/>
    <property type="project" value="GO_Central"/>
</dbReference>
<dbReference type="GO" id="GO:0010095">
    <property type="term" value="P:specification of petal identity"/>
    <property type="evidence" value="ECO:0000315"/>
    <property type="project" value="UniProtKB"/>
</dbReference>
<dbReference type="GO" id="GO:0010097">
    <property type="term" value="P:specification of stamen identity"/>
    <property type="evidence" value="ECO:0000315"/>
    <property type="project" value="UniProtKB"/>
</dbReference>
<dbReference type="CDD" id="cd00265">
    <property type="entry name" value="MADS_MEF2_like"/>
    <property type="match status" value="1"/>
</dbReference>
<dbReference type="Gene3D" id="3.40.1810.10">
    <property type="entry name" value="Transcription factor, MADS-box"/>
    <property type="match status" value="1"/>
</dbReference>
<dbReference type="InterPro" id="IPR050142">
    <property type="entry name" value="MADS-box/MEF2_TF"/>
</dbReference>
<dbReference type="InterPro" id="IPR033896">
    <property type="entry name" value="MEF2-like_N"/>
</dbReference>
<dbReference type="InterPro" id="IPR002487">
    <property type="entry name" value="TF_Kbox"/>
</dbReference>
<dbReference type="InterPro" id="IPR002100">
    <property type="entry name" value="TF_MADSbox"/>
</dbReference>
<dbReference type="InterPro" id="IPR036879">
    <property type="entry name" value="TF_MADSbox_sf"/>
</dbReference>
<dbReference type="PANTHER" id="PTHR48019">
    <property type="entry name" value="SERUM RESPONSE FACTOR HOMOLOG"/>
    <property type="match status" value="1"/>
</dbReference>
<dbReference type="Pfam" id="PF01486">
    <property type="entry name" value="K-box"/>
    <property type="match status" value="1"/>
</dbReference>
<dbReference type="Pfam" id="PF00319">
    <property type="entry name" value="SRF-TF"/>
    <property type="match status" value="1"/>
</dbReference>
<dbReference type="PRINTS" id="PR00404">
    <property type="entry name" value="MADSDOMAIN"/>
</dbReference>
<dbReference type="SMART" id="SM00432">
    <property type="entry name" value="MADS"/>
    <property type="match status" value="1"/>
</dbReference>
<dbReference type="SUPFAM" id="SSF55455">
    <property type="entry name" value="SRF-like"/>
    <property type="match status" value="1"/>
</dbReference>
<dbReference type="PROSITE" id="PS51297">
    <property type="entry name" value="K_BOX"/>
    <property type="match status" value="1"/>
</dbReference>
<dbReference type="PROSITE" id="PS00350">
    <property type="entry name" value="MADS_BOX_1"/>
    <property type="match status" value="1"/>
</dbReference>
<dbReference type="PROSITE" id="PS50066">
    <property type="entry name" value="MADS_BOX_2"/>
    <property type="match status" value="1"/>
</dbReference>
<gene>
    <name evidence="13" type="primary">MADS9</name>
    <name evidence="8" type="synonym">FLB</name>
    <name evidence="6" type="synonym">PI</name>
    <name evidence="14" type="ordered locus">VIT_18s0001g01760</name>
</gene>
<reference key="1">
    <citation type="journal article" date="2006" name="Funct. Plant Biol.">
        <title>VvMADS9, a class B MADS-box gene involved in grapevine flowering, shows different expression patterns in mutants with abnormal petal and stamen structures.</title>
        <authorList>
            <person name="Sreekantan L."/>
            <person name="Torregrosa L."/>
            <person name="Fernandez L."/>
            <person name="Thomas M.R."/>
        </authorList>
        <dbReference type="AGRICOLA" id="IND43853819"/>
    </citation>
    <scope>NUCLEOTIDE SEQUENCE [MRNA]</scope>
    <scope>FUNCTION</scope>
    <scope>TISSUE SPECIFICITY</scope>
    <scope>DISRUPTION PHENOTYPE</scope>
    <source>
        <strain>cv. Cabernet Sauvignon</strain>
    </source>
</reference>
<reference key="2">
    <citation type="journal article" date="2007" name="Gene">
        <title>Isolation of the three grape sub-lineages of B-class MADS-box TM6, PISTILLATA and APETALA3 genes which are differentially expressed during flower and fruit development.</title>
        <authorList>
            <person name="Poupin M.J."/>
            <person name="Federici F."/>
            <person name="Medina C."/>
            <person name="Matus J.T."/>
            <person name="Timmermann T."/>
            <person name="Arce-Johnson P."/>
        </authorList>
    </citation>
    <scope>NUCLEOTIDE SEQUENCE [GENOMIC DNA]</scope>
    <scope>FUNCTION</scope>
    <scope>TISSUE SPECIFICITY</scope>
    <source>
        <strain>cv. Cabernet Sauvignon</strain>
    </source>
</reference>
<reference key="3">
    <citation type="journal article" date="2013" name="Plant J.">
        <title>Mis-expression of a PISTILLATA-like MADS box gene prevents fruit development in grapevine.</title>
        <authorList>
            <person name="Fernandez L."/>
            <person name="Chaib J."/>
            <person name="Martinez-Zapater J.M."/>
            <person name="Thomas M.R."/>
            <person name="Torregrosa L."/>
        </authorList>
    </citation>
    <scope>NUCLEOTIDE SEQUENCE [GENOMIC DNA]</scope>
    <scope>FUNCTION</scope>
    <scope>TISSUE SPECIFICITY</scope>
    <source>
        <strain>cv. Ugni blanc</strain>
    </source>
</reference>
<reference key="4">
    <citation type="journal article" date="2007" name="Nature">
        <title>The grapevine genome sequence suggests ancestral hexaploidization in major angiosperm phyla.</title>
        <authorList>
            <person name="Jaillon O."/>
            <person name="Aury J.-M."/>
            <person name="Noel B."/>
            <person name="Policriti A."/>
            <person name="Clepet C."/>
            <person name="Casagrande A."/>
            <person name="Choisne N."/>
            <person name="Aubourg S."/>
            <person name="Vitulo N."/>
            <person name="Jubin C."/>
            <person name="Vezzi A."/>
            <person name="Legeai F."/>
            <person name="Hugueney P."/>
            <person name="Dasilva C."/>
            <person name="Horner D."/>
            <person name="Mica E."/>
            <person name="Jublot D."/>
            <person name="Poulain J."/>
            <person name="Bruyere C."/>
            <person name="Billault A."/>
            <person name="Segurens B."/>
            <person name="Gouyvenoux M."/>
            <person name="Ugarte E."/>
            <person name="Cattonaro F."/>
            <person name="Anthouard V."/>
            <person name="Vico V."/>
            <person name="Del Fabbro C."/>
            <person name="Alaux M."/>
            <person name="Di Gaspero G."/>
            <person name="Dumas V."/>
            <person name="Felice N."/>
            <person name="Paillard S."/>
            <person name="Juman I."/>
            <person name="Moroldo M."/>
            <person name="Scalabrin S."/>
            <person name="Canaguier A."/>
            <person name="Le Clainche I."/>
            <person name="Malacrida G."/>
            <person name="Durand E."/>
            <person name="Pesole G."/>
            <person name="Laucou V."/>
            <person name="Chatelet P."/>
            <person name="Merdinoglu D."/>
            <person name="Delledonne M."/>
            <person name="Pezzotti M."/>
            <person name="Lecharny A."/>
            <person name="Scarpelli C."/>
            <person name="Artiguenave F."/>
            <person name="Pe M.E."/>
            <person name="Valle G."/>
            <person name="Morgante M."/>
            <person name="Caboche M."/>
            <person name="Adam-Blondon A.-F."/>
            <person name="Weissenbach J."/>
            <person name="Quetier F."/>
            <person name="Wincker P."/>
        </authorList>
    </citation>
    <scope>NUCLEOTIDE SEQUENCE [LARGE SCALE GENOMIC DNA]</scope>
    <source>
        <strain>cv. Pinot noir / PN40024</strain>
    </source>
</reference>
<reference key="5">
    <citation type="journal article" date="2009" name="Plant Physiol.">
        <title>Genome-wide analysis of MIKCC-type MADS box genes in grapevine.</title>
        <authorList>
            <person name="Diaz-Riquelme J."/>
            <person name="Lijavetzky D."/>
            <person name="Martinez-Zapater J.M."/>
            <person name="Carmona M.J."/>
        </authorList>
    </citation>
    <scope>GENE FAMILY</scope>
</reference>
<reference key="6">
    <citation type="journal article" date="2016" name="BMC Genomics">
        <title>Structural and functional annotation of the MADS-box transcription factor family in grapevine.</title>
        <authorList>
            <person name="Grimplet J."/>
            <person name="Martinez-Zapater J.M."/>
            <person name="Carmona M.J."/>
        </authorList>
    </citation>
    <scope>GENE FAMILY</scope>
</reference>
<proteinExistence type="evidence at transcript level"/>
<sequence>MGRGKIEIKRIENSSNRQVTYSKRRNGIMKKAKEITVLCDAHVSLVIFASSGKMHEYCSPSTTLIDILDRYHKQSGKRLWDAKHENLNNELDRIKKENDSMQIELRHLKGEDISSLHHKELMAIEDALEIGLASVRNKQMEFYKMVKKNQRILEEENKHLNYIVHHQGMPMEAGNVREVESGYHQRAVRDYNPQMPFAFRVQPIQPNLQERI</sequence>
<feature type="chain" id="PRO_0000447286" description="Agamous-like MADS-box protein MADS9">
    <location>
        <begin position="1"/>
        <end position="212"/>
    </location>
</feature>
<feature type="domain" description="MADS-box" evidence="1">
    <location>
        <begin position="1"/>
        <end position="61"/>
    </location>
</feature>
<feature type="domain" description="K-box" evidence="2">
    <location>
        <begin position="84"/>
        <end position="170"/>
    </location>
</feature>
<feature type="sequence conflict" description="In Ref. 1; AAY79173, 2; ABK59993 and 3; AFR53062/AFR53063." ref="1 2 3">
    <original>N</original>
    <variation>S</variation>
    <location>
        <position position="88"/>
    </location>
</feature>
<name>MADS9_VITVI</name>
<comment type="function">
    <text evidence="4 5 12">Probable transcription factor that may play role in specifying stamen and petal organ identity.</text>
</comment>
<comment type="subcellular location">
    <subcellularLocation>
        <location evidence="1">Nucleus</location>
    </subcellularLocation>
</comment>
<comment type="tissue specificity">
    <text evidence="3 5">Expressed during flower development in stamens and petals.</text>
</comment>
<comment type="disruption phenotype">
    <text evidence="5">Abnormal petal and stamen structures.</text>
</comment>
<comment type="miscellaneous">
    <text evidence="4">Over-expression of PI in flowers prevents fruit development leading to non-fleshy berries.</text>
</comment>